<sequence>MLKMTLNNLQLFAHKKGGGSTSNGRDSQAKRLGAKAADGQTVTGGSILYRQRGTHIYPGVNVGRGGDDTLFAKVEGVVRFERKGRDKKQVSVYPIAK</sequence>
<reference key="1">
    <citation type="journal article" date="2007" name="J. Bacteriol.">
        <title>Genome sequence of Avery's virulent serotype 2 strain D39 of Streptococcus pneumoniae and comparison with that of unencapsulated laboratory strain R6.</title>
        <authorList>
            <person name="Lanie J.A."/>
            <person name="Ng W.-L."/>
            <person name="Kazmierczak K.M."/>
            <person name="Andrzejewski T.M."/>
            <person name="Davidsen T.M."/>
            <person name="Wayne K.J."/>
            <person name="Tettelin H."/>
            <person name="Glass J.I."/>
            <person name="Winkler M.E."/>
        </authorList>
    </citation>
    <scope>NUCLEOTIDE SEQUENCE [LARGE SCALE GENOMIC DNA]</scope>
    <source>
        <strain>D39 / NCTC 7466</strain>
    </source>
</reference>
<gene>
    <name evidence="2" type="primary">rpmA</name>
    <name type="ordered locus">SPD_0991</name>
</gene>
<name>RL27_STRP2</name>
<organism>
    <name type="scientific">Streptococcus pneumoniae serotype 2 (strain D39 / NCTC 7466)</name>
    <dbReference type="NCBI Taxonomy" id="373153"/>
    <lineage>
        <taxon>Bacteria</taxon>
        <taxon>Bacillati</taxon>
        <taxon>Bacillota</taxon>
        <taxon>Bacilli</taxon>
        <taxon>Lactobacillales</taxon>
        <taxon>Streptococcaceae</taxon>
        <taxon>Streptococcus</taxon>
    </lineage>
</organism>
<accession>Q04KI2</accession>
<evidence type="ECO:0000250" key="1">
    <source>
        <dbReference type="UniProtKB" id="Q2FXT0"/>
    </source>
</evidence>
<evidence type="ECO:0000255" key="2">
    <source>
        <dbReference type="HAMAP-Rule" id="MF_00539"/>
    </source>
</evidence>
<evidence type="ECO:0000256" key="3">
    <source>
        <dbReference type="SAM" id="MobiDB-lite"/>
    </source>
</evidence>
<evidence type="ECO:0000305" key="4"/>
<dbReference type="EMBL" id="CP000410">
    <property type="protein sequence ID" value="ABJ53759.1"/>
    <property type="molecule type" value="Genomic_DNA"/>
</dbReference>
<dbReference type="RefSeq" id="WP_000916509.1">
    <property type="nucleotide sequence ID" value="NZ_JAMLJR010000014.1"/>
</dbReference>
<dbReference type="SMR" id="Q04KI2"/>
<dbReference type="PaxDb" id="373153-SPD_0991"/>
<dbReference type="GeneID" id="93739803"/>
<dbReference type="KEGG" id="spd:SPD_0991"/>
<dbReference type="eggNOG" id="COG0211">
    <property type="taxonomic scope" value="Bacteria"/>
</dbReference>
<dbReference type="HOGENOM" id="CLU_095424_4_0_9"/>
<dbReference type="BioCyc" id="SPNE373153:G1G6V-1082-MONOMER"/>
<dbReference type="Proteomes" id="UP000001452">
    <property type="component" value="Chromosome"/>
</dbReference>
<dbReference type="GO" id="GO:0022625">
    <property type="term" value="C:cytosolic large ribosomal subunit"/>
    <property type="evidence" value="ECO:0007669"/>
    <property type="project" value="TreeGrafter"/>
</dbReference>
<dbReference type="GO" id="GO:0003735">
    <property type="term" value="F:structural constituent of ribosome"/>
    <property type="evidence" value="ECO:0007669"/>
    <property type="project" value="InterPro"/>
</dbReference>
<dbReference type="GO" id="GO:0006412">
    <property type="term" value="P:translation"/>
    <property type="evidence" value="ECO:0007669"/>
    <property type="project" value="UniProtKB-UniRule"/>
</dbReference>
<dbReference type="FunFam" id="2.40.50.100:FF:000004">
    <property type="entry name" value="50S ribosomal protein L27"/>
    <property type="match status" value="1"/>
</dbReference>
<dbReference type="Gene3D" id="2.40.50.100">
    <property type="match status" value="1"/>
</dbReference>
<dbReference type="HAMAP" id="MF_00539">
    <property type="entry name" value="Ribosomal_bL27"/>
    <property type="match status" value="1"/>
</dbReference>
<dbReference type="InterPro" id="IPR001684">
    <property type="entry name" value="Ribosomal_bL27"/>
</dbReference>
<dbReference type="InterPro" id="IPR018261">
    <property type="entry name" value="Ribosomal_bL27_CS"/>
</dbReference>
<dbReference type="NCBIfam" id="TIGR00062">
    <property type="entry name" value="L27"/>
    <property type="match status" value="1"/>
</dbReference>
<dbReference type="PANTHER" id="PTHR15893:SF0">
    <property type="entry name" value="LARGE RIBOSOMAL SUBUNIT PROTEIN BL27M"/>
    <property type="match status" value="1"/>
</dbReference>
<dbReference type="PANTHER" id="PTHR15893">
    <property type="entry name" value="RIBOSOMAL PROTEIN L27"/>
    <property type="match status" value="1"/>
</dbReference>
<dbReference type="Pfam" id="PF01016">
    <property type="entry name" value="Ribosomal_L27"/>
    <property type="match status" value="1"/>
</dbReference>
<dbReference type="PRINTS" id="PR00063">
    <property type="entry name" value="RIBOSOMALL27"/>
</dbReference>
<dbReference type="SUPFAM" id="SSF110324">
    <property type="entry name" value="Ribosomal L27 protein-like"/>
    <property type="match status" value="1"/>
</dbReference>
<dbReference type="PROSITE" id="PS00831">
    <property type="entry name" value="RIBOSOMAL_L27"/>
    <property type="match status" value="1"/>
</dbReference>
<proteinExistence type="inferred from homology"/>
<protein>
    <recommendedName>
        <fullName evidence="2">Large ribosomal subunit protein bL27</fullName>
    </recommendedName>
    <alternativeName>
        <fullName evidence="4">50S ribosomal protein L27</fullName>
    </alternativeName>
</protein>
<feature type="propeptide" id="PRO_0000459961" evidence="1">
    <location>
        <begin position="1"/>
        <end position="12"/>
    </location>
</feature>
<feature type="chain" id="PRO_1000061052" description="Large ribosomal subunit protein bL27">
    <location>
        <begin position="13"/>
        <end position="97"/>
    </location>
</feature>
<feature type="region of interest" description="Disordered" evidence="3">
    <location>
        <begin position="13"/>
        <end position="37"/>
    </location>
</feature>
<keyword id="KW-1185">Reference proteome</keyword>
<keyword id="KW-0687">Ribonucleoprotein</keyword>
<keyword id="KW-0689">Ribosomal protein</keyword>
<comment type="PTM">
    <text evidence="1">The N-terminus is cleaved by ribosomal processing cysteine protease Prp.</text>
</comment>
<comment type="similarity">
    <text evidence="2">Belongs to the bacterial ribosomal protein bL27 family.</text>
</comment>